<organism>
    <name type="scientific">Nitrosomonas europaea (strain ATCC 19718 / CIP 103999 / KCTC 2705 / NBRC 14298)</name>
    <dbReference type="NCBI Taxonomy" id="228410"/>
    <lineage>
        <taxon>Bacteria</taxon>
        <taxon>Pseudomonadati</taxon>
        <taxon>Pseudomonadota</taxon>
        <taxon>Betaproteobacteria</taxon>
        <taxon>Nitrosomonadales</taxon>
        <taxon>Nitrosomonadaceae</taxon>
        <taxon>Nitrosomonas</taxon>
    </lineage>
</organism>
<name>RRF_NITEU</name>
<sequence>MIADVKKSAEQKMQKSLDALKVDFSKVRSGRPHTGLLDHIMVDYYGTPTPIKQLANVTLADARTIGIIPWDKKIFSAIEKAIRDSDLGLNPMTVSDMVRVPMPPLTEERRKDLTKIVKTEAEAARVAMRNIRRDANAHLKELLKDKLIAEDEDRRAQDEIQKLTDRYIAEVDKLLQTKEAELMAV</sequence>
<feature type="chain" id="PRO_0000167504" description="Ribosome-recycling factor">
    <location>
        <begin position="1"/>
        <end position="185"/>
    </location>
</feature>
<accession>Q82TZ8</accession>
<comment type="function">
    <text evidence="1">Responsible for the release of ribosomes from messenger RNA at the termination of protein biosynthesis. May increase the efficiency of translation by recycling ribosomes from one round of translation to another.</text>
</comment>
<comment type="subcellular location">
    <subcellularLocation>
        <location evidence="1">Cytoplasm</location>
    </subcellularLocation>
</comment>
<comment type="similarity">
    <text evidence="1">Belongs to the RRF family.</text>
</comment>
<reference key="1">
    <citation type="journal article" date="2003" name="J. Bacteriol.">
        <title>Complete genome sequence of the ammonia-oxidizing bacterium and obligate chemolithoautotroph Nitrosomonas europaea.</title>
        <authorList>
            <person name="Chain P."/>
            <person name="Lamerdin J.E."/>
            <person name="Larimer F.W."/>
            <person name="Regala W."/>
            <person name="Lao V."/>
            <person name="Land M.L."/>
            <person name="Hauser L."/>
            <person name="Hooper A.B."/>
            <person name="Klotz M.G."/>
            <person name="Norton J."/>
            <person name="Sayavedra-Soto L.A."/>
            <person name="Arciero D.M."/>
            <person name="Hommes N.G."/>
            <person name="Whittaker M.M."/>
            <person name="Arp D.J."/>
        </authorList>
    </citation>
    <scope>NUCLEOTIDE SEQUENCE [LARGE SCALE GENOMIC DNA]</scope>
    <source>
        <strain>ATCC 19718 / CIP 103999 / KCTC 2705 / NBRC 14298</strain>
    </source>
</reference>
<protein>
    <recommendedName>
        <fullName evidence="1">Ribosome-recycling factor</fullName>
        <shortName evidence="1">RRF</shortName>
    </recommendedName>
    <alternativeName>
        <fullName evidence="1">Ribosome-releasing factor</fullName>
    </alternativeName>
</protein>
<dbReference type="EMBL" id="AL954747">
    <property type="protein sequence ID" value="CAD85626.1"/>
    <property type="molecule type" value="Genomic_DNA"/>
</dbReference>
<dbReference type="RefSeq" id="WP_011112269.1">
    <property type="nucleotide sequence ID" value="NC_004757.1"/>
</dbReference>
<dbReference type="SMR" id="Q82TZ8"/>
<dbReference type="STRING" id="228410.NE1715"/>
<dbReference type="GeneID" id="87104875"/>
<dbReference type="KEGG" id="neu:NE1715"/>
<dbReference type="eggNOG" id="COG0233">
    <property type="taxonomic scope" value="Bacteria"/>
</dbReference>
<dbReference type="HOGENOM" id="CLU_073981_2_1_4"/>
<dbReference type="OrthoDB" id="9804006at2"/>
<dbReference type="PhylomeDB" id="Q82TZ8"/>
<dbReference type="Proteomes" id="UP000001416">
    <property type="component" value="Chromosome"/>
</dbReference>
<dbReference type="GO" id="GO:0005829">
    <property type="term" value="C:cytosol"/>
    <property type="evidence" value="ECO:0007669"/>
    <property type="project" value="GOC"/>
</dbReference>
<dbReference type="GO" id="GO:0043023">
    <property type="term" value="F:ribosomal large subunit binding"/>
    <property type="evidence" value="ECO:0007669"/>
    <property type="project" value="TreeGrafter"/>
</dbReference>
<dbReference type="GO" id="GO:0002184">
    <property type="term" value="P:cytoplasmic translational termination"/>
    <property type="evidence" value="ECO:0007669"/>
    <property type="project" value="TreeGrafter"/>
</dbReference>
<dbReference type="CDD" id="cd00520">
    <property type="entry name" value="RRF"/>
    <property type="match status" value="1"/>
</dbReference>
<dbReference type="FunFam" id="1.10.132.20:FF:000001">
    <property type="entry name" value="Ribosome-recycling factor"/>
    <property type="match status" value="1"/>
</dbReference>
<dbReference type="FunFam" id="3.30.1360.40:FF:000001">
    <property type="entry name" value="Ribosome-recycling factor"/>
    <property type="match status" value="1"/>
</dbReference>
<dbReference type="Gene3D" id="3.30.1360.40">
    <property type="match status" value="1"/>
</dbReference>
<dbReference type="Gene3D" id="1.10.132.20">
    <property type="entry name" value="Ribosome-recycling factor"/>
    <property type="match status" value="1"/>
</dbReference>
<dbReference type="HAMAP" id="MF_00040">
    <property type="entry name" value="RRF"/>
    <property type="match status" value="1"/>
</dbReference>
<dbReference type="InterPro" id="IPR002661">
    <property type="entry name" value="Ribosome_recyc_fac"/>
</dbReference>
<dbReference type="InterPro" id="IPR023584">
    <property type="entry name" value="Ribosome_recyc_fac_dom"/>
</dbReference>
<dbReference type="InterPro" id="IPR036191">
    <property type="entry name" value="RRF_sf"/>
</dbReference>
<dbReference type="NCBIfam" id="TIGR00496">
    <property type="entry name" value="frr"/>
    <property type="match status" value="1"/>
</dbReference>
<dbReference type="PANTHER" id="PTHR20982:SF3">
    <property type="entry name" value="MITOCHONDRIAL RIBOSOME RECYCLING FACTOR PSEUDO 1"/>
    <property type="match status" value="1"/>
</dbReference>
<dbReference type="PANTHER" id="PTHR20982">
    <property type="entry name" value="RIBOSOME RECYCLING FACTOR"/>
    <property type="match status" value="1"/>
</dbReference>
<dbReference type="Pfam" id="PF01765">
    <property type="entry name" value="RRF"/>
    <property type="match status" value="1"/>
</dbReference>
<dbReference type="SUPFAM" id="SSF55194">
    <property type="entry name" value="Ribosome recycling factor, RRF"/>
    <property type="match status" value="1"/>
</dbReference>
<keyword id="KW-0963">Cytoplasm</keyword>
<keyword id="KW-0648">Protein biosynthesis</keyword>
<keyword id="KW-1185">Reference proteome</keyword>
<evidence type="ECO:0000255" key="1">
    <source>
        <dbReference type="HAMAP-Rule" id="MF_00040"/>
    </source>
</evidence>
<gene>
    <name evidence="1" type="primary">frr</name>
    <name type="synonym">rrf</name>
    <name type="ordered locus">NE1715</name>
</gene>
<proteinExistence type="inferred from homology"/>